<accession>P63770</accession>
<accession>Q48W95</accession>
<accession>Q99XS0</accession>
<protein>
    <recommendedName>
        <fullName evidence="1">Co-chaperonin GroES</fullName>
    </recommendedName>
    <alternativeName>
        <fullName evidence="1">10 kDa chaperonin</fullName>
    </alternativeName>
    <alternativeName>
        <fullName evidence="1">Chaperonin-10</fullName>
        <shortName evidence="1">Cpn10</shortName>
    </alternativeName>
</protein>
<keyword id="KW-0143">Chaperone</keyword>
<keyword id="KW-0963">Cytoplasm</keyword>
<keyword id="KW-1185">Reference proteome</keyword>
<evidence type="ECO:0000255" key="1">
    <source>
        <dbReference type="HAMAP-Rule" id="MF_00580"/>
    </source>
</evidence>
<evidence type="ECO:0000305" key="2"/>
<gene>
    <name evidence="1" type="primary">groES</name>
    <name evidence="1" type="synonym">groS</name>
    <name type="ordered locus">SPy_2072</name>
    <name type="ordered locus">M5005_Spy1762</name>
</gene>
<name>CH10_STRP1</name>
<sequence length="96" mass="10332">MLKPLGDRVVVRFDDEKEQTVGGFVLAGTHKESTRKATVLAVSETGVRTITGDSVLPSVSVGQEVLVENGHDLEVTVDDEKVSIIRESDIIAIVTK</sequence>
<organism>
    <name type="scientific">Streptococcus pyogenes serotype M1</name>
    <dbReference type="NCBI Taxonomy" id="301447"/>
    <lineage>
        <taxon>Bacteria</taxon>
        <taxon>Bacillati</taxon>
        <taxon>Bacillota</taxon>
        <taxon>Bacilli</taxon>
        <taxon>Lactobacillales</taxon>
        <taxon>Streptococcaceae</taxon>
        <taxon>Streptococcus</taxon>
    </lineage>
</organism>
<comment type="function">
    <text evidence="1">Together with the chaperonin GroEL, plays an essential role in assisting protein folding. The GroEL-GroES system forms a nano-cage that allows encapsulation of the non-native substrate proteins and provides a physical environment optimized to promote and accelerate protein folding. GroES binds to the apical surface of the GroEL ring, thereby capping the opening of the GroEL channel.</text>
</comment>
<comment type="subunit">
    <text evidence="1">Heptamer of 7 subunits arranged in a ring. Interacts with the chaperonin GroEL.</text>
</comment>
<comment type="subcellular location">
    <subcellularLocation>
        <location evidence="1">Cytoplasm</location>
    </subcellularLocation>
</comment>
<comment type="similarity">
    <text evidence="1">Belongs to the GroES chaperonin family.</text>
</comment>
<comment type="sequence caution" evidence="2">
    <conflict type="erroneous initiation">
        <sequence resource="EMBL-CDS" id="AAZ52380"/>
    </conflict>
</comment>
<reference key="1">
    <citation type="journal article" date="2001" name="Proc. Natl. Acad. Sci. U.S.A.">
        <title>Complete genome sequence of an M1 strain of Streptococcus pyogenes.</title>
        <authorList>
            <person name="Ferretti J.J."/>
            <person name="McShan W.M."/>
            <person name="Ajdic D.J."/>
            <person name="Savic D.J."/>
            <person name="Savic G."/>
            <person name="Lyon K."/>
            <person name="Primeaux C."/>
            <person name="Sezate S."/>
            <person name="Suvorov A.N."/>
            <person name="Kenton S."/>
            <person name="Lai H.S."/>
            <person name="Lin S.P."/>
            <person name="Qian Y."/>
            <person name="Jia H.G."/>
            <person name="Najar F.Z."/>
            <person name="Ren Q."/>
            <person name="Zhu H."/>
            <person name="Song L."/>
            <person name="White J."/>
            <person name="Yuan X."/>
            <person name="Clifton S.W."/>
            <person name="Roe B.A."/>
            <person name="McLaughlin R.E."/>
        </authorList>
    </citation>
    <scope>NUCLEOTIDE SEQUENCE [LARGE SCALE GENOMIC DNA]</scope>
    <source>
        <strain>ATCC 700294 / SF370 / Serotype M1</strain>
    </source>
</reference>
<reference key="2">
    <citation type="journal article" date="2005" name="J. Infect. Dis.">
        <title>Evolutionary origin and emergence of a highly successful clone of serotype M1 group A Streptococcus involved multiple horizontal gene transfer events.</title>
        <authorList>
            <person name="Sumby P."/>
            <person name="Porcella S.F."/>
            <person name="Madrigal A.G."/>
            <person name="Barbian K.D."/>
            <person name="Virtaneva K."/>
            <person name="Ricklefs S.M."/>
            <person name="Sturdevant D.E."/>
            <person name="Graham M.R."/>
            <person name="Vuopio-Varkila J."/>
            <person name="Hoe N.P."/>
            <person name="Musser J.M."/>
        </authorList>
    </citation>
    <scope>NUCLEOTIDE SEQUENCE [LARGE SCALE GENOMIC DNA]</scope>
    <source>
        <strain>ATCC BAA-947 / MGAS5005 / Serotype M1</strain>
    </source>
</reference>
<dbReference type="EMBL" id="AE004092">
    <property type="protein sequence ID" value="AAK34728.1"/>
    <property type="molecule type" value="Genomic_DNA"/>
</dbReference>
<dbReference type="EMBL" id="CP000017">
    <property type="protein sequence ID" value="AAZ52380.1"/>
    <property type="status" value="ALT_INIT"/>
    <property type="molecule type" value="Genomic_DNA"/>
</dbReference>
<dbReference type="RefSeq" id="NP_270007.1">
    <property type="nucleotide sequence ID" value="NC_002737.2"/>
</dbReference>
<dbReference type="SMR" id="P63770"/>
<dbReference type="PaxDb" id="1314-HKU360_01875"/>
<dbReference type="KEGG" id="spy:SPy_2072"/>
<dbReference type="KEGG" id="spz:M5005_Spy1762"/>
<dbReference type="PATRIC" id="fig|160490.10.peg.1796"/>
<dbReference type="HOGENOM" id="CLU_132825_1_2_9"/>
<dbReference type="OMA" id="EDFLIMR"/>
<dbReference type="Proteomes" id="UP000000750">
    <property type="component" value="Chromosome"/>
</dbReference>
<dbReference type="GO" id="GO:0005737">
    <property type="term" value="C:cytoplasm"/>
    <property type="evidence" value="ECO:0007669"/>
    <property type="project" value="UniProtKB-SubCell"/>
</dbReference>
<dbReference type="GO" id="GO:0005524">
    <property type="term" value="F:ATP binding"/>
    <property type="evidence" value="ECO:0007669"/>
    <property type="project" value="InterPro"/>
</dbReference>
<dbReference type="GO" id="GO:0046872">
    <property type="term" value="F:metal ion binding"/>
    <property type="evidence" value="ECO:0007669"/>
    <property type="project" value="TreeGrafter"/>
</dbReference>
<dbReference type="GO" id="GO:0044183">
    <property type="term" value="F:protein folding chaperone"/>
    <property type="evidence" value="ECO:0007669"/>
    <property type="project" value="InterPro"/>
</dbReference>
<dbReference type="GO" id="GO:0051087">
    <property type="term" value="F:protein-folding chaperone binding"/>
    <property type="evidence" value="ECO:0007669"/>
    <property type="project" value="TreeGrafter"/>
</dbReference>
<dbReference type="GO" id="GO:0051082">
    <property type="term" value="F:unfolded protein binding"/>
    <property type="evidence" value="ECO:0007669"/>
    <property type="project" value="TreeGrafter"/>
</dbReference>
<dbReference type="GO" id="GO:0051085">
    <property type="term" value="P:chaperone cofactor-dependent protein refolding"/>
    <property type="evidence" value="ECO:0007669"/>
    <property type="project" value="TreeGrafter"/>
</dbReference>
<dbReference type="CDD" id="cd00320">
    <property type="entry name" value="cpn10"/>
    <property type="match status" value="1"/>
</dbReference>
<dbReference type="FunFam" id="2.30.33.40:FF:000001">
    <property type="entry name" value="10 kDa chaperonin"/>
    <property type="match status" value="1"/>
</dbReference>
<dbReference type="Gene3D" id="2.30.33.40">
    <property type="entry name" value="GroES chaperonin"/>
    <property type="match status" value="1"/>
</dbReference>
<dbReference type="HAMAP" id="MF_00580">
    <property type="entry name" value="CH10"/>
    <property type="match status" value="1"/>
</dbReference>
<dbReference type="InterPro" id="IPR020818">
    <property type="entry name" value="Chaperonin_GroES"/>
</dbReference>
<dbReference type="InterPro" id="IPR037124">
    <property type="entry name" value="Chaperonin_GroES_sf"/>
</dbReference>
<dbReference type="InterPro" id="IPR018369">
    <property type="entry name" value="Chaprnonin_Cpn10_CS"/>
</dbReference>
<dbReference type="InterPro" id="IPR011032">
    <property type="entry name" value="GroES-like_sf"/>
</dbReference>
<dbReference type="NCBIfam" id="NF001528">
    <property type="entry name" value="PRK00364.1-4"/>
    <property type="match status" value="1"/>
</dbReference>
<dbReference type="PANTHER" id="PTHR10772">
    <property type="entry name" value="10 KDA HEAT SHOCK PROTEIN"/>
    <property type="match status" value="1"/>
</dbReference>
<dbReference type="PANTHER" id="PTHR10772:SF58">
    <property type="entry name" value="CO-CHAPERONIN GROES"/>
    <property type="match status" value="1"/>
</dbReference>
<dbReference type="Pfam" id="PF00166">
    <property type="entry name" value="Cpn10"/>
    <property type="match status" value="1"/>
</dbReference>
<dbReference type="PRINTS" id="PR00297">
    <property type="entry name" value="CHAPERONIN10"/>
</dbReference>
<dbReference type="SMART" id="SM00883">
    <property type="entry name" value="Cpn10"/>
    <property type="match status" value="1"/>
</dbReference>
<dbReference type="SUPFAM" id="SSF50129">
    <property type="entry name" value="GroES-like"/>
    <property type="match status" value="1"/>
</dbReference>
<dbReference type="PROSITE" id="PS00681">
    <property type="entry name" value="CHAPERONINS_CPN10"/>
    <property type="match status" value="1"/>
</dbReference>
<proteinExistence type="inferred from homology"/>
<feature type="chain" id="PRO_0000174868" description="Co-chaperonin GroES">
    <location>
        <begin position="1"/>
        <end position="96"/>
    </location>
</feature>